<organism>
    <name type="scientific">Bacillus anthracis</name>
    <dbReference type="NCBI Taxonomy" id="1392"/>
    <lineage>
        <taxon>Bacteria</taxon>
        <taxon>Bacillati</taxon>
        <taxon>Bacillota</taxon>
        <taxon>Bacilli</taxon>
        <taxon>Bacillales</taxon>
        <taxon>Bacillaceae</taxon>
        <taxon>Bacillus</taxon>
        <taxon>Bacillus cereus group</taxon>
    </lineage>
</organism>
<gene>
    <name evidence="1" type="primary">ligA</name>
    <name type="ordered locus">BA_0306</name>
    <name type="ordered locus">GBAA_0306</name>
    <name type="ordered locus">BAS0292</name>
</gene>
<sequence length="669" mass="75110">MSKEIAKKRIEELRDLLNTFNYQYHVLDNPSVSDAEYDRNMQELIKLEAENPEFMSEDSPSIRVGGTVLDIFEKVTHKSPMLSLGNAFNEGDLRDFDRRVRQGIDDANVRYICELKIDGLAVSLHYEKGRFIQGATRGDGVTGEDITQNLKTIKAIPLRLNEEVTLEARGEAYMPKRSFVKLNEEKEQNGEDVFANPRNAAAGSIRQLDPKIAAKRNLSMFVYGLANVEEKTIPSHSESLDYLGELGFKTNPNRRTCETIEEVIAYVEEWQEKRPHLDYEIDGIVIKVDDVALQESLGTTAKSPRWAIAYKFPAEEVVTRLTGIELSVGRTGVVTPTAELEPVRVAGTIVRRASLHNEDLIREKDIRIGDYVVVKKAGDIIPEVVNVIFDKRTGGEEEYHMPTHCPACESELVRLEEEVALRCINPTCPAQIREGLIHFVSRNAMNIDGLGERVITQLFDADYIRTFADLYSLTKEQLLQLERFGEKSATNLVQAIENSKENSLERLLFGLGIRHVGAKAARTFAEHFETMDALVKATEEELKAINEIGEKMAQSVVAYFDNEDVLELLQQFKEYGVNMTYKGIKIADLQNVESYFAGKTVVLTGKLEVMGRSEAKKKIEALGGKVTGSVSKSTDLVVAGEAAGSKLAQAEKHNVEVWNEERFLQELNK</sequence>
<keyword id="KW-0227">DNA damage</keyword>
<keyword id="KW-0234">DNA repair</keyword>
<keyword id="KW-0235">DNA replication</keyword>
<keyword id="KW-0436">Ligase</keyword>
<keyword id="KW-0460">Magnesium</keyword>
<keyword id="KW-0464">Manganese</keyword>
<keyword id="KW-0479">Metal-binding</keyword>
<keyword id="KW-0520">NAD</keyword>
<keyword id="KW-1185">Reference proteome</keyword>
<keyword id="KW-0862">Zinc</keyword>
<name>DNLJ_BACAN</name>
<protein>
    <recommendedName>
        <fullName evidence="1">DNA ligase</fullName>
        <ecNumber evidence="1">6.5.1.2</ecNumber>
    </recommendedName>
    <alternativeName>
        <fullName evidence="1">Polydeoxyribonucleotide synthase [NAD(+)]</fullName>
    </alternativeName>
</protein>
<proteinExistence type="inferred from homology"/>
<comment type="function">
    <text evidence="1">DNA ligase that catalyzes the formation of phosphodiester linkages between 5'-phosphoryl and 3'-hydroxyl groups in double-stranded DNA using NAD as a coenzyme and as the energy source for the reaction. It is essential for DNA replication and repair of damaged DNA.</text>
</comment>
<comment type="catalytic activity">
    <reaction evidence="1">
        <text>NAD(+) + (deoxyribonucleotide)n-3'-hydroxyl + 5'-phospho-(deoxyribonucleotide)m = (deoxyribonucleotide)n+m + AMP + beta-nicotinamide D-nucleotide.</text>
        <dbReference type="EC" id="6.5.1.2"/>
    </reaction>
</comment>
<comment type="cofactor">
    <cofactor evidence="1">
        <name>Mg(2+)</name>
        <dbReference type="ChEBI" id="CHEBI:18420"/>
    </cofactor>
    <cofactor evidence="1">
        <name>Mn(2+)</name>
        <dbReference type="ChEBI" id="CHEBI:29035"/>
    </cofactor>
</comment>
<comment type="similarity">
    <text evidence="1">Belongs to the NAD-dependent DNA ligase family. LigA subfamily.</text>
</comment>
<evidence type="ECO:0000255" key="1">
    <source>
        <dbReference type="HAMAP-Rule" id="MF_01588"/>
    </source>
</evidence>
<accession>Q81ZG1</accession>
<accession>Q6F0D2</accession>
<accession>Q6I4A8</accession>
<dbReference type="EC" id="6.5.1.2" evidence="1"/>
<dbReference type="EMBL" id="AE016879">
    <property type="protein sequence ID" value="AAP24341.1"/>
    <property type="molecule type" value="Genomic_DNA"/>
</dbReference>
<dbReference type="EMBL" id="AE017225">
    <property type="protein sequence ID" value="AAT52623.1"/>
    <property type="molecule type" value="Genomic_DNA"/>
</dbReference>
<dbReference type="EMBL" id="AE017334">
    <property type="protein sequence ID" value="AAT70114.1"/>
    <property type="molecule type" value="Genomic_DNA"/>
</dbReference>
<dbReference type="RefSeq" id="NP_842855.1">
    <property type="nucleotide sequence ID" value="NC_003997.3"/>
</dbReference>
<dbReference type="RefSeq" id="WP_000031433.1">
    <property type="nucleotide sequence ID" value="NZ_WXXJ01000007.1"/>
</dbReference>
<dbReference type="RefSeq" id="YP_026572.1">
    <property type="nucleotide sequence ID" value="NC_005945.1"/>
</dbReference>
<dbReference type="SMR" id="Q81ZG1"/>
<dbReference type="IntAct" id="Q81ZG1">
    <property type="interactions" value="7"/>
</dbReference>
<dbReference type="STRING" id="261594.GBAA_0306"/>
<dbReference type="DNASU" id="1084819"/>
<dbReference type="GeneID" id="45020364"/>
<dbReference type="KEGG" id="ban:BA_0306"/>
<dbReference type="KEGG" id="banh:HYU01_01665"/>
<dbReference type="KEGG" id="bar:GBAA_0306"/>
<dbReference type="KEGG" id="bat:BAS0292"/>
<dbReference type="PATRIC" id="fig|198094.11.peg.296"/>
<dbReference type="eggNOG" id="COG0272">
    <property type="taxonomic scope" value="Bacteria"/>
</dbReference>
<dbReference type="HOGENOM" id="CLU_007764_2_1_9"/>
<dbReference type="OMA" id="HDVEHEI"/>
<dbReference type="OrthoDB" id="9759736at2"/>
<dbReference type="Proteomes" id="UP000000427">
    <property type="component" value="Chromosome"/>
</dbReference>
<dbReference type="Proteomes" id="UP000000594">
    <property type="component" value="Chromosome"/>
</dbReference>
<dbReference type="GO" id="GO:0005829">
    <property type="term" value="C:cytosol"/>
    <property type="evidence" value="ECO:0007669"/>
    <property type="project" value="TreeGrafter"/>
</dbReference>
<dbReference type="GO" id="GO:0003677">
    <property type="term" value="F:DNA binding"/>
    <property type="evidence" value="ECO:0007669"/>
    <property type="project" value="InterPro"/>
</dbReference>
<dbReference type="GO" id="GO:0003911">
    <property type="term" value="F:DNA ligase (NAD+) activity"/>
    <property type="evidence" value="ECO:0007669"/>
    <property type="project" value="UniProtKB-UniRule"/>
</dbReference>
<dbReference type="GO" id="GO:0046872">
    <property type="term" value="F:metal ion binding"/>
    <property type="evidence" value="ECO:0007669"/>
    <property type="project" value="UniProtKB-KW"/>
</dbReference>
<dbReference type="GO" id="GO:0006281">
    <property type="term" value="P:DNA repair"/>
    <property type="evidence" value="ECO:0007669"/>
    <property type="project" value="UniProtKB-KW"/>
</dbReference>
<dbReference type="GO" id="GO:0006260">
    <property type="term" value="P:DNA replication"/>
    <property type="evidence" value="ECO:0007669"/>
    <property type="project" value="UniProtKB-KW"/>
</dbReference>
<dbReference type="CDD" id="cd17748">
    <property type="entry name" value="BRCT_DNA_ligase_like"/>
    <property type="match status" value="1"/>
</dbReference>
<dbReference type="CDD" id="cd00114">
    <property type="entry name" value="LIGANc"/>
    <property type="match status" value="1"/>
</dbReference>
<dbReference type="FunFam" id="1.10.150.20:FF:000006">
    <property type="entry name" value="DNA ligase"/>
    <property type="match status" value="1"/>
</dbReference>
<dbReference type="FunFam" id="1.10.150.20:FF:000007">
    <property type="entry name" value="DNA ligase"/>
    <property type="match status" value="1"/>
</dbReference>
<dbReference type="FunFam" id="1.10.287.610:FF:000002">
    <property type="entry name" value="DNA ligase"/>
    <property type="match status" value="1"/>
</dbReference>
<dbReference type="FunFam" id="2.40.50.140:FF:000012">
    <property type="entry name" value="DNA ligase"/>
    <property type="match status" value="1"/>
</dbReference>
<dbReference type="FunFam" id="3.30.470.30:FF:000001">
    <property type="entry name" value="DNA ligase"/>
    <property type="match status" value="1"/>
</dbReference>
<dbReference type="FunFam" id="3.40.50.10190:FF:000026">
    <property type="entry name" value="DNA ligase"/>
    <property type="match status" value="1"/>
</dbReference>
<dbReference type="FunFam" id="6.20.10.30:FF:000002">
    <property type="entry name" value="DNA ligase"/>
    <property type="match status" value="1"/>
</dbReference>
<dbReference type="Gene3D" id="6.20.10.30">
    <property type="match status" value="1"/>
</dbReference>
<dbReference type="Gene3D" id="1.10.150.20">
    <property type="entry name" value="5' to 3' exonuclease, C-terminal subdomain"/>
    <property type="match status" value="2"/>
</dbReference>
<dbReference type="Gene3D" id="3.40.50.10190">
    <property type="entry name" value="BRCT domain"/>
    <property type="match status" value="1"/>
</dbReference>
<dbReference type="Gene3D" id="3.30.470.30">
    <property type="entry name" value="DNA ligase/mRNA capping enzyme"/>
    <property type="match status" value="1"/>
</dbReference>
<dbReference type="Gene3D" id="1.10.287.610">
    <property type="entry name" value="Helix hairpin bin"/>
    <property type="match status" value="1"/>
</dbReference>
<dbReference type="Gene3D" id="2.40.50.140">
    <property type="entry name" value="Nucleic acid-binding proteins"/>
    <property type="match status" value="1"/>
</dbReference>
<dbReference type="HAMAP" id="MF_01588">
    <property type="entry name" value="DNA_ligase_A"/>
    <property type="match status" value="1"/>
</dbReference>
<dbReference type="InterPro" id="IPR001357">
    <property type="entry name" value="BRCT_dom"/>
</dbReference>
<dbReference type="InterPro" id="IPR036420">
    <property type="entry name" value="BRCT_dom_sf"/>
</dbReference>
<dbReference type="InterPro" id="IPR041663">
    <property type="entry name" value="DisA/LigA_HHH"/>
</dbReference>
<dbReference type="InterPro" id="IPR001679">
    <property type="entry name" value="DNA_ligase"/>
</dbReference>
<dbReference type="InterPro" id="IPR018239">
    <property type="entry name" value="DNA_ligase_AS"/>
</dbReference>
<dbReference type="InterPro" id="IPR033136">
    <property type="entry name" value="DNA_ligase_CS"/>
</dbReference>
<dbReference type="InterPro" id="IPR013839">
    <property type="entry name" value="DNAligase_adenylation"/>
</dbReference>
<dbReference type="InterPro" id="IPR013840">
    <property type="entry name" value="DNAligase_N"/>
</dbReference>
<dbReference type="InterPro" id="IPR003583">
    <property type="entry name" value="Hlx-hairpin-Hlx_DNA-bd_motif"/>
</dbReference>
<dbReference type="InterPro" id="IPR012340">
    <property type="entry name" value="NA-bd_OB-fold"/>
</dbReference>
<dbReference type="InterPro" id="IPR004150">
    <property type="entry name" value="NAD_DNA_ligase_OB"/>
</dbReference>
<dbReference type="InterPro" id="IPR010994">
    <property type="entry name" value="RuvA_2-like"/>
</dbReference>
<dbReference type="InterPro" id="IPR004149">
    <property type="entry name" value="Znf_DNAligase_C4"/>
</dbReference>
<dbReference type="NCBIfam" id="TIGR00575">
    <property type="entry name" value="dnlj"/>
    <property type="match status" value="1"/>
</dbReference>
<dbReference type="NCBIfam" id="NF005932">
    <property type="entry name" value="PRK07956.1"/>
    <property type="match status" value="1"/>
</dbReference>
<dbReference type="PANTHER" id="PTHR23389">
    <property type="entry name" value="CHROMOSOME TRANSMISSION FIDELITY FACTOR 18"/>
    <property type="match status" value="1"/>
</dbReference>
<dbReference type="PANTHER" id="PTHR23389:SF9">
    <property type="entry name" value="DNA LIGASE"/>
    <property type="match status" value="1"/>
</dbReference>
<dbReference type="Pfam" id="PF00533">
    <property type="entry name" value="BRCT"/>
    <property type="match status" value="1"/>
</dbReference>
<dbReference type="Pfam" id="PF01653">
    <property type="entry name" value="DNA_ligase_aden"/>
    <property type="match status" value="1"/>
</dbReference>
<dbReference type="Pfam" id="PF03120">
    <property type="entry name" value="DNA_ligase_OB"/>
    <property type="match status" value="1"/>
</dbReference>
<dbReference type="Pfam" id="PF03119">
    <property type="entry name" value="DNA_ligase_ZBD"/>
    <property type="match status" value="1"/>
</dbReference>
<dbReference type="Pfam" id="PF12826">
    <property type="entry name" value="HHH_2"/>
    <property type="match status" value="1"/>
</dbReference>
<dbReference type="Pfam" id="PF14520">
    <property type="entry name" value="HHH_5"/>
    <property type="match status" value="1"/>
</dbReference>
<dbReference type="Pfam" id="PF22745">
    <property type="entry name" value="Nlig-Ia"/>
    <property type="match status" value="1"/>
</dbReference>
<dbReference type="PIRSF" id="PIRSF001604">
    <property type="entry name" value="LigA"/>
    <property type="match status" value="1"/>
</dbReference>
<dbReference type="SMART" id="SM00292">
    <property type="entry name" value="BRCT"/>
    <property type="match status" value="1"/>
</dbReference>
<dbReference type="SMART" id="SM00278">
    <property type="entry name" value="HhH1"/>
    <property type="match status" value="3"/>
</dbReference>
<dbReference type="SMART" id="SM00532">
    <property type="entry name" value="LIGANc"/>
    <property type="match status" value="1"/>
</dbReference>
<dbReference type="SUPFAM" id="SSF52113">
    <property type="entry name" value="BRCT domain"/>
    <property type="match status" value="1"/>
</dbReference>
<dbReference type="SUPFAM" id="SSF56091">
    <property type="entry name" value="DNA ligase/mRNA capping enzyme, catalytic domain"/>
    <property type="match status" value="1"/>
</dbReference>
<dbReference type="SUPFAM" id="SSF50249">
    <property type="entry name" value="Nucleic acid-binding proteins"/>
    <property type="match status" value="1"/>
</dbReference>
<dbReference type="SUPFAM" id="SSF47781">
    <property type="entry name" value="RuvA domain 2-like"/>
    <property type="match status" value="1"/>
</dbReference>
<dbReference type="PROSITE" id="PS50172">
    <property type="entry name" value="BRCT"/>
    <property type="match status" value="1"/>
</dbReference>
<dbReference type="PROSITE" id="PS01055">
    <property type="entry name" value="DNA_LIGASE_N1"/>
    <property type="match status" value="1"/>
</dbReference>
<dbReference type="PROSITE" id="PS01056">
    <property type="entry name" value="DNA_LIGASE_N2"/>
    <property type="match status" value="1"/>
</dbReference>
<feature type="chain" id="PRO_0000313122" description="DNA ligase">
    <location>
        <begin position="1"/>
        <end position="669"/>
    </location>
</feature>
<feature type="domain" description="BRCT" evidence="1">
    <location>
        <begin position="591"/>
        <end position="669"/>
    </location>
</feature>
<feature type="active site" description="N6-AMP-lysine intermediate" evidence="1">
    <location>
        <position position="116"/>
    </location>
</feature>
<feature type="binding site" evidence="1">
    <location>
        <begin position="34"/>
        <end position="38"/>
    </location>
    <ligand>
        <name>NAD(+)</name>
        <dbReference type="ChEBI" id="CHEBI:57540"/>
    </ligand>
</feature>
<feature type="binding site" evidence="1">
    <location>
        <begin position="83"/>
        <end position="84"/>
    </location>
    <ligand>
        <name>NAD(+)</name>
        <dbReference type="ChEBI" id="CHEBI:57540"/>
    </ligand>
</feature>
<feature type="binding site" evidence="1">
    <location>
        <position position="114"/>
    </location>
    <ligand>
        <name>NAD(+)</name>
        <dbReference type="ChEBI" id="CHEBI:57540"/>
    </ligand>
</feature>
<feature type="binding site" evidence="1">
    <location>
        <position position="137"/>
    </location>
    <ligand>
        <name>NAD(+)</name>
        <dbReference type="ChEBI" id="CHEBI:57540"/>
    </ligand>
</feature>
<feature type="binding site" evidence="1">
    <location>
        <position position="171"/>
    </location>
    <ligand>
        <name>NAD(+)</name>
        <dbReference type="ChEBI" id="CHEBI:57540"/>
    </ligand>
</feature>
<feature type="binding site" evidence="1">
    <location>
        <position position="287"/>
    </location>
    <ligand>
        <name>NAD(+)</name>
        <dbReference type="ChEBI" id="CHEBI:57540"/>
    </ligand>
</feature>
<feature type="binding site" evidence="1">
    <location>
        <position position="311"/>
    </location>
    <ligand>
        <name>NAD(+)</name>
        <dbReference type="ChEBI" id="CHEBI:57540"/>
    </ligand>
</feature>
<feature type="binding site" evidence="1">
    <location>
        <position position="405"/>
    </location>
    <ligand>
        <name>Zn(2+)</name>
        <dbReference type="ChEBI" id="CHEBI:29105"/>
    </ligand>
</feature>
<feature type="binding site" evidence="1">
    <location>
        <position position="408"/>
    </location>
    <ligand>
        <name>Zn(2+)</name>
        <dbReference type="ChEBI" id="CHEBI:29105"/>
    </ligand>
</feature>
<feature type="binding site" evidence="1">
    <location>
        <position position="423"/>
    </location>
    <ligand>
        <name>Zn(2+)</name>
        <dbReference type="ChEBI" id="CHEBI:29105"/>
    </ligand>
</feature>
<feature type="binding site" evidence="1">
    <location>
        <position position="428"/>
    </location>
    <ligand>
        <name>Zn(2+)</name>
        <dbReference type="ChEBI" id="CHEBI:29105"/>
    </ligand>
</feature>
<reference key="1">
    <citation type="journal article" date="2003" name="Nature">
        <title>The genome sequence of Bacillus anthracis Ames and comparison to closely related bacteria.</title>
        <authorList>
            <person name="Read T.D."/>
            <person name="Peterson S.N."/>
            <person name="Tourasse N.J."/>
            <person name="Baillie L.W."/>
            <person name="Paulsen I.T."/>
            <person name="Nelson K.E."/>
            <person name="Tettelin H."/>
            <person name="Fouts D.E."/>
            <person name="Eisen J.A."/>
            <person name="Gill S.R."/>
            <person name="Holtzapple E.K."/>
            <person name="Okstad O.A."/>
            <person name="Helgason E."/>
            <person name="Rilstone J."/>
            <person name="Wu M."/>
            <person name="Kolonay J.F."/>
            <person name="Beanan M.J."/>
            <person name="Dodson R.J."/>
            <person name="Brinkac L.M."/>
            <person name="Gwinn M.L."/>
            <person name="DeBoy R.T."/>
            <person name="Madpu R."/>
            <person name="Daugherty S.C."/>
            <person name="Durkin A.S."/>
            <person name="Haft D.H."/>
            <person name="Nelson W.C."/>
            <person name="Peterson J.D."/>
            <person name="Pop M."/>
            <person name="Khouri H.M."/>
            <person name="Radune D."/>
            <person name="Benton J.L."/>
            <person name="Mahamoud Y."/>
            <person name="Jiang L."/>
            <person name="Hance I.R."/>
            <person name="Weidman J.F."/>
            <person name="Berry K.J."/>
            <person name="Plaut R.D."/>
            <person name="Wolf A.M."/>
            <person name="Watkins K.L."/>
            <person name="Nierman W.C."/>
            <person name="Hazen A."/>
            <person name="Cline R.T."/>
            <person name="Redmond C."/>
            <person name="Thwaite J.E."/>
            <person name="White O."/>
            <person name="Salzberg S.L."/>
            <person name="Thomason B."/>
            <person name="Friedlander A.M."/>
            <person name="Koehler T.M."/>
            <person name="Hanna P.C."/>
            <person name="Kolstoe A.-B."/>
            <person name="Fraser C.M."/>
        </authorList>
    </citation>
    <scope>NUCLEOTIDE SEQUENCE [LARGE SCALE GENOMIC DNA]</scope>
    <source>
        <strain>Ames / isolate Porton</strain>
    </source>
</reference>
<reference key="2">
    <citation type="journal article" date="2009" name="J. Bacteriol.">
        <title>The complete genome sequence of Bacillus anthracis Ames 'Ancestor'.</title>
        <authorList>
            <person name="Ravel J."/>
            <person name="Jiang L."/>
            <person name="Stanley S.T."/>
            <person name="Wilson M.R."/>
            <person name="Decker R.S."/>
            <person name="Read T.D."/>
            <person name="Worsham P."/>
            <person name="Keim P.S."/>
            <person name="Salzberg S.L."/>
            <person name="Fraser-Liggett C.M."/>
            <person name="Rasko D.A."/>
        </authorList>
    </citation>
    <scope>NUCLEOTIDE SEQUENCE [LARGE SCALE GENOMIC DNA]</scope>
    <source>
        <strain>Ames ancestor</strain>
    </source>
</reference>
<reference key="3">
    <citation type="submission" date="2004-01" db="EMBL/GenBank/DDBJ databases">
        <title>Complete genome sequence of Bacillus anthracis Sterne.</title>
        <authorList>
            <person name="Brettin T.S."/>
            <person name="Bruce D."/>
            <person name="Challacombe J.F."/>
            <person name="Gilna P."/>
            <person name="Han C."/>
            <person name="Hill K."/>
            <person name="Hitchcock P."/>
            <person name="Jackson P."/>
            <person name="Keim P."/>
            <person name="Longmire J."/>
            <person name="Lucas S."/>
            <person name="Okinaka R."/>
            <person name="Richardson P."/>
            <person name="Rubin E."/>
            <person name="Tice H."/>
        </authorList>
    </citation>
    <scope>NUCLEOTIDE SEQUENCE [LARGE SCALE GENOMIC DNA]</scope>
    <source>
        <strain>Sterne</strain>
    </source>
</reference>